<sequence length="1938" mass="222941">MSSDQEMAIFGEAAPYLRKSEKERIEAQNKPFDAKTSVFVADPKESFVKATVQSREGGKVTAKTEAGATVTVKEDQCFPMNPPKYDKIEDMAMMTHLHEPAVLYNLKERYAAWMIYTYSGLFCVTVNPYKWLPVYNAEVVTAYRGKKRQEAPPHIFSISDNAYQFMLTDRENQSILITGESGAGKTVNTKRVIQYFATIAVTGEKKKEEPTSGKMQGTLEDQIISANPLLEAFGNAKTVRNDNSSRFGKFIRIHFGTTGKLASADIETYLLEKSRVTFQLKAERSYHIFYQIMSNKKPDLIEMLLITTNPYDYAFVSQGEITVPSIDDQEELMATDSAIEILGFTSDERVSIYKLTGAVMHYGNLKFKQKQREEQAEPDGTEVADKAAYLQGLNSADLLKALCYPRVKVGNEFVTKGQTVEQVYNAVGALAKAVYDKMFLWMVARINQQLDTKQPRQYFIGVLDIAGFEIFDFNSLEQLCINFTNEKLQQFFNHHMFVLEQEEYKKEGIEWEFIDFGMDLAACIELIEKPMGIFSILEEECMFPKATDTSFKNKLYEQHLGKSNNFQKPKPVKGKPEAHFSLIHYAGTVDYNITGWLDKNKDPLNETVVGLYQKSSVKTLALLFSGPASADAEAGGKKGGKKKGSSFQTVSALFRENLNKLMTNLRSTHPHFVRCIIPNETKTPGAMEHELVLHQLRCNGVLEGIRICRKGFPSRILYADFKQRYKVLNASAIPEGQFIDSKKASEKLLGSIDIDHTQYKFGHTKVFFKAGLLGLLEEMRDDKLAQIITRTQARCRGFLARVEYQRMVERRESIFCIQYNVRAFMNVKHWPWMKLYFKIKPLLKSAETEKEMANMKEEFEKTKESLAKAEAKRKELEEKMVALMQEKNDLQLQVQAEADSLADAEERCDQLIKTKIQLEAKIKEATERAEDEEEINAELTAKKRKLEDECSELKKDIDDLELTLAKVEKEKHATENKVKNLTEEMAGLDETIAKLTKEKKALQEAHQQTLDDLQAEEDKVNTLTKAKTKLEQQVDDLEGSLEQEKKLRMDLERAKRKLEGDLKLAQESTMDIENDKQQLDEKLKKKEFEMSNLQSKIEDEQALAMQLQKKIKELQARIEELEEEIEAERASRAKAEKQRSDLSRELEEISERLEEAGGATSAQIEMNKKREAEFQKMRRDLEEATLQHEATAAALRKKHADSVAELGEQIDNLQRVKQKLEKEKSEMKMEIDDLASNMETVSKAKGNLEKMCRTLEDQLSELKSKEEEQQRLVNDLTGQRARLQTEAGEYSRQLDEKDSLVSQLSRGKQAFTQQIEELKRQLEEEIKAKSALAHALQSARHDCDLLREQYEEEQEAKAELQRAMSKANSEVAQWRTKYETDAIQRTEELEEAKKKLAQRLQDAEEHVEAVNAKCASLEKTKQRLQNEVEDLMIDVERTNAACAALDKKQRNFDKILSEWKHKYEETHAELEASQKESRSLSTELFKVKNAYEESLDQLETLKRENKNLQQEISDLTEQIAEGGKRIHELEKVKKQIEQEKSEIQAALEEAEASLEHEEGKILRIQLELNQVKSEIDRKIAEKDEEIDQLKRNHVRVVETMQTMLDAEIRSRNDAIRIKKKMEGDLNEMEIQLNHANRMAAEALRNYRNTQGILKDTQLHLDDALRGQEDLKEQLAMVERRANLLQAEIEELRATLEQTERSRKIAEQELLDASERVQLLHTQNTSLINTKKKLETDISQLQGEMEDIVQEAHNAEEKAKKAITDAAMMAEELKKEQDTSAHLERMKKNLEQTVKDLQHRLDEAEQLALKGGKKQIQKLEARVRDLEGEVESEQKRNVEAVKGLRKHERRVKELTYQTEEDRKNILRLQDLVDKLQSKVKAYKRQAEEAEEQSNVNLSKFRKIQHELEEAEERADIAESQVNKLRVKSREVHTKIISEE</sequence>
<reference key="1">
    <citation type="submission" date="2002-07" db="EMBL/GenBank/DDBJ databases">
        <title>Sequencing of the horse myosin heavy chain isoforms.</title>
        <authorList>
            <person name="Chikuni K."/>
            <person name="Nakajima I."/>
            <person name="Muroya S."/>
        </authorList>
    </citation>
    <scope>NUCLEOTIDE SEQUENCE [MRNA]</scope>
    <source>
        <strain>Thoroughbred</strain>
        <tissue>Skeletal muscle</tissue>
    </source>
</reference>
<keyword id="KW-0009">Actin-binding</keyword>
<keyword id="KW-0067">ATP-binding</keyword>
<keyword id="KW-0112">Calmodulin-binding</keyword>
<keyword id="KW-0175">Coiled coil</keyword>
<keyword id="KW-0963">Cytoplasm</keyword>
<keyword id="KW-1009">Hearing</keyword>
<keyword id="KW-0488">Methylation</keyword>
<keyword id="KW-0505">Motor protein</keyword>
<keyword id="KW-0514">Muscle protein</keyword>
<keyword id="KW-0518">Myosin</keyword>
<keyword id="KW-0547">Nucleotide-binding</keyword>
<keyword id="KW-0597">Phosphoprotein</keyword>
<keyword id="KW-1185">Reference proteome</keyword>
<keyword id="KW-0787">Thick filament</keyword>
<organism>
    <name type="scientific">Equus caballus</name>
    <name type="common">Horse</name>
    <dbReference type="NCBI Taxonomy" id="9796"/>
    <lineage>
        <taxon>Eukaryota</taxon>
        <taxon>Metazoa</taxon>
        <taxon>Chordata</taxon>
        <taxon>Craniata</taxon>
        <taxon>Vertebrata</taxon>
        <taxon>Euteleostomi</taxon>
        <taxon>Mammalia</taxon>
        <taxon>Eutheria</taxon>
        <taxon>Laurasiatheria</taxon>
        <taxon>Perissodactyla</taxon>
        <taxon>Equidae</taxon>
        <taxon>Equus</taxon>
    </lineage>
</organism>
<comment type="function">
    <text evidence="5">Required for normal hearing. It plays a role in cochlear amplification of auditory stimuli, likely through the positive regulation of prestin (SLC26A5) activity and outer hair cell (OHC) electromotility.</text>
</comment>
<comment type="subunit">
    <text evidence="2">Muscle myosin is a hexameric protein that consists of 2 heavy chain subunits (MHC), 2 alkali light chain subunits (MLC) and 2 regulatory light chain subunits (MLC-2). Interacts with SLC26A5.</text>
</comment>
<comment type="subcellular location">
    <subcellularLocation>
        <location evidence="1">Cytoplasm</location>
        <location evidence="1">Myofibril</location>
    </subcellularLocation>
    <text evidence="1">Thick filaments of the myofibrils.</text>
</comment>
<comment type="domain">
    <text>The rodlike tail sequence is highly repetitive, showing cycles of a 28-residue repeat pattern composed of 4 heptapeptides, characteristic for alpha-helical coiled coils.</text>
</comment>
<comment type="domain">
    <text evidence="11">Limited proteolysis of myosin heavy chain produces 1 light meromyosin (LMM) and 1 heavy meromyosin (HMM). HMM can be further cleaved into 2 globular subfragments (S1) and 1 rod-shaped subfragment (S2).</text>
</comment>
<comment type="similarity">
    <text evidence="11">Belongs to the TRAFAC class myosin-kinesin ATPase superfamily. Myosin family.</text>
</comment>
<comment type="caution">
    <text evidence="11">Represents a conventional myosin. This protein should not be confused with the unconventional myosin-1 (MYO1).</text>
</comment>
<accession>Q8MJV0</accession>
<name>MYH1_HORSE</name>
<gene>
    <name type="primary">MYH1</name>
</gene>
<proteinExistence type="evidence at transcript level"/>
<evidence type="ECO:0000250" key="1"/>
<evidence type="ECO:0000250" key="2">
    <source>
        <dbReference type="UniProtKB" id="P12882"/>
    </source>
</evidence>
<evidence type="ECO:0000250" key="3">
    <source>
        <dbReference type="UniProtKB" id="Q28641"/>
    </source>
</evidence>
<evidence type="ECO:0000250" key="4">
    <source>
        <dbReference type="UniProtKB" id="Q29RW1"/>
    </source>
</evidence>
<evidence type="ECO:0000250" key="5">
    <source>
        <dbReference type="UniProtKB" id="Q5SX40"/>
    </source>
</evidence>
<evidence type="ECO:0000255" key="6"/>
<evidence type="ECO:0000255" key="7">
    <source>
        <dbReference type="PROSITE-ProRule" id="PRU00116"/>
    </source>
</evidence>
<evidence type="ECO:0000255" key="8">
    <source>
        <dbReference type="PROSITE-ProRule" id="PRU00782"/>
    </source>
</evidence>
<evidence type="ECO:0000255" key="9">
    <source>
        <dbReference type="PROSITE-ProRule" id="PRU01190"/>
    </source>
</evidence>
<evidence type="ECO:0000256" key="10">
    <source>
        <dbReference type="SAM" id="MobiDB-lite"/>
    </source>
</evidence>
<evidence type="ECO:0000305" key="11"/>
<protein>
    <recommendedName>
        <fullName>Myosin-1</fullName>
    </recommendedName>
    <alternativeName>
        <fullName>Myosin heavy chain 1</fullName>
    </alternativeName>
    <alternativeName>
        <fullName>Myosin heavy chain 2x</fullName>
        <shortName>MyHC-2x</shortName>
    </alternativeName>
    <alternativeName>
        <fullName>Myosin heavy chain, skeletal muscle, adult 1</fullName>
    </alternativeName>
</protein>
<feature type="chain" id="PRO_0000274163" description="Myosin-1">
    <location>
        <begin position="1"/>
        <end position="1938"/>
    </location>
</feature>
<feature type="domain" description="Myosin N-terminal SH3-like" evidence="9">
    <location>
        <begin position="33"/>
        <end position="82"/>
    </location>
</feature>
<feature type="domain" description="Myosin motor" evidence="8">
    <location>
        <begin position="86"/>
        <end position="781"/>
    </location>
</feature>
<feature type="domain" description="IQ" evidence="7">
    <location>
        <begin position="784"/>
        <end position="813"/>
    </location>
</feature>
<feature type="region of interest" description="Actin-binding" evidence="1">
    <location>
        <begin position="658"/>
        <end position="680"/>
    </location>
</feature>
<feature type="region of interest" description="Actin-binding" evidence="1">
    <location>
        <begin position="760"/>
        <end position="774"/>
    </location>
</feature>
<feature type="region of interest" description="Disordered" evidence="10">
    <location>
        <begin position="1124"/>
        <end position="1146"/>
    </location>
</feature>
<feature type="region of interest" description="Disordered" evidence="10">
    <location>
        <begin position="1152"/>
        <end position="1171"/>
    </location>
</feature>
<feature type="coiled-coil region" evidence="6">
    <location>
        <begin position="842"/>
        <end position="1938"/>
    </location>
</feature>
<feature type="compositionally biased region" description="Basic and acidic residues" evidence="10">
    <location>
        <begin position="1127"/>
        <end position="1146"/>
    </location>
</feature>
<feature type="binding site" evidence="6">
    <location>
        <begin position="179"/>
        <end position="186"/>
    </location>
    <ligand>
        <name>ATP</name>
        <dbReference type="ChEBI" id="CHEBI:30616"/>
    </ligand>
</feature>
<feature type="modified residue" description="Phosphothreonine" evidence="4">
    <location>
        <position position="64"/>
    </location>
</feature>
<feature type="modified residue" description="Phosphothreonine" evidence="4">
    <location>
        <position position="69"/>
    </location>
</feature>
<feature type="modified residue" description="N6,N6,N6-trimethyllysine" evidence="6">
    <location>
        <position position="130"/>
    </location>
</feature>
<feature type="modified residue" description="Phosphotyrosine" evidence="4">
    <location>
        <position position="389"/>
    </location>
</feature>
<feature type="modified residue" description="Phosphothreonine" evidence="4">
    <location>
        <position position="419"/>
    </location>
</feature>
<feature type="modified residue" description="Phosphotyrosine" evidence="4">
    <location>
        <position position="424"/>
    </location>
</feature>
<feature type="modified residue" description="Phosphoserine" evidence="4">
    <location>
        <position position="625"/>
    </location>
</feature>
<feature type="modified residue" description="Pros-methylhistidine" evidence="3">
    <location>
        <position position="756"/>
    </location>
</feature>
<feature type="modified residue" description="Phosphoserine" evidence="4">
    <location>
        <position position="1091"/>
    </location>
</feature>
<feature type="modified residue" description="Phosphoserine" evidence="4">
    <location>
        <position position="1095"/>
    </location>
</feature>
<feature type="modified residue" description="Phosphoserine" evidence="4">
    <location>
        <position position="1161"/>
    </location>
</feature>
<feature type="modified residue" description="Phosphoserine" evidence="4">
    <location>
        <position position="1236"/>
    </location>
</feature>
<feature type="modified residue" description="Phosphothreonine" evidence="4">
    <location>
        <position position="1240"/>
    </location>
</feature>
<feature type="modified residue" description="Phosphoserine" evidence="4">
    <location>
        <position position="1242"/>
    </location>
</feature>
<feature type="modified residue" description="Phosphothreonine" evidence="4">
    <location>
        <position position="1254"/>
    </location>
</feature>
<feature type="modified residue" description="Phosphoserine" evidence="4">
    <location>
        <position position="1260"/>
    </location>
</feature>
<feature type="modified residue" description="Phosphothreonine" evidence="4">
    <location>
        <position position="1285"/>
    </location>
</feature>
<feature type="modified residue" description="Phosphoserine" evidence="4">
    <location>
        <position position="1291"/>
    </location>
</feature>
<feature type="modified residue" description="Phosphoserine" evidence="4">
    <location>
        <position position="1302"/>
    </location>
</feature>
<feature type="modified residue" description="Phosphoserine" evidence="4">
    <location>
        <position position="1305"/>
    </location>
</feature>
<feature type="modified residue" description="Phosphotyrosine" evidence="4">
    <location>
        <position position="1463"/>
    </location>
</feature>
<feature type="modified residue" description="Phosphothreonine" evidence="4">
    <location>
        <position position="1466"/>
    </location>
</feature>
<feature type="modified residue" description="Phosphoserine" evidence="4">
    <location>
        <position position="1473"/>
    </location>
</feature>
<feature type="modified residue" description="Phosphotyrosine" evidence="4">
    <location>
        <position position="1491"/>
    </location>
</feature>
<feature type="modified residue" description="Phosphoserine" evidence="4">
    <location>
        <position position="1494"/>
    </location>
</feature>
<feature type="modified residue" description="Phosphothreonine" evidence="4">
    <location>
        <position position="1500"/>
    </location>
</feature>
<feature type="modified residue" description="Phosphoserine" evidence="4">
    <location>
        <position position="1513"/>
    </location>
</feature>
<feature type="modified residue" description="Phosphothreonine" evidence="4">
    <location>
        <position position="1516"/>
    </location>
</feature>
<feature type="modified residue" description="Phosphoserine" evidence="4">
    <location>
        <position position="1541"/>
    </location>
</feature>
<feature type="modified residue" description="Phosphoserine" evidence="4">
    <location>
        <position position="1553"/>
    </location>
</feature>
<feature type="modified residue" description="Phosphoserine" evidence="4">
    <location>
        <position position="1573"/>
    </location>
</feature>
<feature type="modified residue" description="Phosphoserine" evidence="4">
    <location>
        <position position="1713"/>
    </location>
</feature>
<feature type="modified residue" description="Phosphoserine" evidence="4">
    <location>
        <position position="1725"/>
    </location>
</feature>
<feature type="modified residue" description="Phosphothreonine" evidence="4">
    <location>
        <position position="1729"/>
    </location>
</feature>
<feature type="modified residue" description="Phosphothreonine" evidence="4">
    <location>
        <position position="1735"/>
    </location>
</feature>
<feature type="modified residue" description="Phosphoserine" evidence="4">
    <location>
        <position position="1738"/>
    </location>
</feature>
<dbReference type="EMBL" id="AB088366">
    <property type="protein sequence ID" value="BAC05680.1"/>
    <property type="molecule type" value="mRNA"/>
</dbReference>
<dbReference type="RefSeq" id="NP_001075228.1">
    <property type="nucleotide sequence ID" value="NM_001081759.1"/>
</dbReference>
<dbReference type="RefSeq" id="XP_005597093.1">
    <property type="nucleotide sequence ID" value="XM_005597036.4"/>
</dbReference>
<dbReference type="SMR" id="Q8MJV0"/>
<dbReference type="FunCoup" id="Q8MJV0">
    <property type="interactions" value="77"/>
</dbReference>
<dbReference type="STRING" id="9796.ENSECAP00000031274"/>
<dbReference type="PaxDb" id="9796-ENSECAP00000031274"/>
<dbReference type="Ensembl" id="ENSECAT00000050018.3">
    <property type="protein sequence ID" value="ENSECAP00000026067.2"/>
    <property type="gene ID" value="ENSECAG00000024667.4"/>
</dbReference>
<dbReference type="GeneID" id="791235"/>
<dbReference type="KEGG" id="ecb:791235"/>
<dbReference type="CTD" id="4619"/>
<dbReference type="VGNC" id="VGNC:49493">
    <property type="gene designation" value="MYH2"/>
</dbReference>
<dbReference type="GeneTree" id="ENSGT00940000154760"/>
<dbReference type="HOGENOM" id="CLU_000192_8_1_1"/>
<dbReference type="InParanoid" id="Q8MJV0"/>
<dbReference type="OrthoDB" id="312459at2759"/>
<dbReference type="Proteomes" id="UP000002281">
    <property type="component" value="Chromosome 11"/>
</dbReference>
<dbReference type="Bgee" id="ENSECAG00000022909">
    <property type="expression patterns" value="Expressed in triceps brachii and 6 other cell types or tissues"/>
</dbReference>
<dbReference type="GO" id="GO:0030016">
    <property type="term" value="C:myofibril"/>
    <property type="evidence" value="ECO:0007669"/>
    <property type="project" value="UniProtKB-SubCell"/>
</dbReference>
<dbReference type="GO" id="GO:0016459">
    <property type="term" value="C:myosin complex"/>
    <property type="evidence" value="ECO:0007669"/>
    <property type="project" value="UniProtKB-KW"/>
</dbReference>
<dbReference type="GO" id="GO:0032982">
    <property type="term" value="C:myosin filament"/>
    <property type="evidence" value="ECO:0007669"/>
    <property type="project" value="UniProtKB-KW"/>
</dbReference>
<dbReference type="GO" id="GO:0051015">
    <property type="term" value="F:actin filament binding"/>
    <property type="evidence" value="ECO:0007669"/>
    <property type="project" value="InterPro"/>
</dbReference>
<dbReference type="GO" id="GO:0005524">
    <property type="term" value="F:ATP binding"/>
    <property type="evidence" value="ECO:0007669"/>
    <property type="project" value="UniProtKB-KW"/>
</dbReference>
<dbReference type="GO" id="GO:0005516">
    <property type="term" value="F:calmodulin binding"/>
    <property type="evidence" value="ECO:0007669"/>
    <property type="project" value="UniProtKB-KW"/>
</dbReference>
<dbReference type="GO" id="GO:0003774">
    <property type="term" value="F:cytoskeletal motor activity"/>
    <property type="evidence" value="ECO:0007669"/>
    <property type="project" value="InterPro"/>
</dbReference>
<dbReference type="FunFam" id="1.10.10.820:FF:000001">
    <property type="entry name" value="Myosin heavy chain"/>
    <property type="match status" value="1"/>
</dbReference>
<dbReference type="FunFam" id="1.20.5.340:FF:000002">
    <property type="entry name" value="Myosin heavy chain"/>
    <property type="match status" value="1"/>
</dbReference>
<dbReference type="FunFam" id="1.20.5.340:FF:000003">
    <property type="entry name" value="Myosin heavy chain"/>
    <property type="match status" value="1"/>
</dbReference>
<dbReference type="FunFam" id="1.20.5.340:FF:000004">
    <property type="entry name" value="Myosin heavy chain"/>
    <property type="match status" value="1"/>
</dbReference>
<dbReference type="FunFam" id="1.20.5.340:FF:000006">
    <property type="entry name" value="Myosin heavy chain"/>
    <property type="match status" value="1"/>
</dbReference>
<dbReference type="FunFam" id="1.20.5.340:FF:000013">
    <property type="entry name" value="Myosin heavy chain"/>
    <property type="match status" value="1"/>
</dbReference>
<dbReference type="FunFam" id="1.20.5.370:FF:000001">
    <property type="entry name" value="Myosin heavy chain"/>
    <property type="match status" value="1"/>
</dbReference>
<dbReference type="FunFam" id="1.20.5.370:FF:000002">
    <property type="entry name" value="Myosin heavy chain"/>
    <property type="match status" value="1"/>
</dbReference>
<dbReference type="FunFam" id="1.20.5.370:FF:000003">
    <property type="entry name" value="Myosin heavy chain"/>
    <property type="match status" value="1"/>
</dbReference>
<dbReference type="FunFam" id="1.20.5.370:FF:000007">
    <property type="entry name" value="Myosin heavy chain"/>
    <property type="match status" value="1"/>
</dbReference>
<dbReference type="FunFam" id="1.20.5.370:FF:000008">
    <property type="entry name" value="Myosin heavy chain"/>
    <property type="match status" value="1"/>
</dbReference>
<dbReference type="FunFam" id="1.20.5.4820:FF:000001">
    <property type="entry name" value="Myosin heavy chain"/>
    <property type="match status" value="1"/>
</dbReference>
<dbReference type="FunFam" id="1.20.58.530:FF:000001">
    <property type="entry name" value="Myosin heavy chain"/>
    <property type="match status" value="1"/>
</dbReference>
<dbReference type="FunFam" id="2.30.30.360:FF:000001">
    <property type="entry name" value="Myosin heavy chain"/>
    <property type="match status" value="1"/>
</dbReference>
<dbReference type="FunFam" id="3.40.850.10:FF:000024">
    <property type="entry name" value="Myosin heavy chain, isoform J"/>
    <property type="match status" value="1"/>
</dbReference>
<dbReference type="FunFam" id="1.20.120.720:FF:000001">
    <property type="entry name" value="Myosin heavy chain, muscle"/>
    <property type="match status" value="1"/>
</dbReference>
<dbReference type="Gene3D" id="1.10.10.820">
    <property type="match status" value="1"/>
</dbReference>
<dbReference type="Gene3D" id="1.20.5.340">
    <property type="match status" value="5"/>
</dbReference>
<dbReference type="Gene3D" id="1.20.5.370">
    <property type="match status" value="4"/>
</dbReference>
<dbReference type="Gene3D" id="1.20.5.4820">
    <property type="match status" value="1"/>
</dbReference>
<dbReference type="Gene3D" id="1.20.58.530">
    <property type="match status" value="1"/>
</dbReference>
<dbReference type="Gene3D" id="6.10.250.2420">
    <property type="match status" value="1"/>
</dbReference>
<dbReference type="Gene3D" id="3.40.850.10">
    <property type="entry name" value="Kinesin motor domain"/>
    <property type="match status" value="1"/>
</dbReference>
<dbReference type="Gene3D" id="2.30.30.360">
    <property type="entry name" value="Myosin S1 fragment, N-terminal"/>
    <property type="match status" value="1"/>
</dbReference>
<dbReference type="Gene3D" id="1.20.120.720">
    <property type="entry name" value="Myosin VI head, motor domain, U50 subdomain"/>
    <property type="match status" value="1"/>
</dbReference>
<dbReference type="InterPro" id="IPR000048">
    <property type="entry name" value="IQ_motif_EF-hand-BS"/>
</dbReference>
<dbReference type="InterPro" id="IPR036961">
    <property type="entry name" value="Kinesin_motor_dom_sf"/>
</dbReference>
<dbReference type="InterPro" id="IPR001609">
    <property type="entry name" value="Myosin_head_motor_dom-like"/>
</dbReference>
<dbReference type="InterPro" id="IPR004009">
    <property type="entry name" value="Myosin_N"/>
</dbReference>
<dbReference type="InterPro" id="IPR008989">
    <property type="entry name" value="Myosin_S1_N"/>
</dbReference>
<dbReference type="InterPro" id="IPR002928">
    <property type="entry name" value="Myosin_tail"/>
</dbReference>
<dbReference type="InterPro" id="IPR027417">
    <property type="entry name" value="P-loop_NTPase"/>
</dbReference>
<dbReference type="InterPro" id="IPR014751">
    <property type="entry name" value="XRCC4-like_C"/>
</dbReference>
<dbReference type="PANTHER" id="PTHR45615">
    <property type="entry name" value="MYOSIN HEAVY CHAIN, NON-MUSCLE"/>
    <property type="match status" value="1"/>
</dbReference>
<dbReference type="PANTHER" id="PTHR45615:SF2">
    <property type="entry name" value="MYOSIN-1"/>
    <property type="match status" value="1"/>
</dbReference>
<dbReference type="Pfam" id="PF00063">
    <property type="entry name" value="Myosin_head"/>
    <property type="match status" value="1"/>
</dbReference>
<dbReference type="Pfam" id="PF02736">
    <property type="entry name" value="Myosin_N"/>
    <property type="match status" value="1"/>
</dbReference>
<dbReference type="Pfam" id="PF01576">
    <property type="entry name" value="Myosin_tail_1"/>
    <property type="match status" value="1"/>
</dbReference>
<dbReference type="PRINTS" id="PR00193">
    <property type="entry name" value="MYOSINHEAVY"/>
</dbReference>
<dbReference type="SMART" id="SM00015">
    <property type="entry name" value="IQ"/>
    <property type="match status" value="1"/>
</dbReference>
<dbReference type="SMART" id="SM00242">
    <property type="entry name" value="MYSc"/>
    <property type="match status" value="1"/>
</dbReference>
<dbReference type="SUPFAM" id="SSF90257">
    <property type="entry name" value="Myosin rod fragments"/>
    <property type="match status" value="5"/>
</dbReference>
<dbReference type="SUPFAM" id="SSF52540">
    <property type="entry name" value="P-loop containing nucleoside triphosphate hydrolases"/>
    <property type="match status" value="1"/>
</dbReference>
<dbReference type="SUPFAM" id="SSF57997">
    <property type="entry name" value="Tropomyosin"/>
    <property type="match status" value="1"/>
</dbReference>
<dbReference type="PROSITE" id="PS50096">
    <property type="entry name" value="IQ"/>
    <property type="match status" value="1"/>
</dbReference>
<dbReference type="PROSITE" id="PS51456">
    <property type="entry name" value="MYOSIN_MOTOR"/>
    <property type="match status" value="1"/>
</dbReference>
<dbReference type="PROSITE" id="PS51844">
    <property type="entry name" value="SH3_LIKE"/>
    <property type="match status" value="1"/>
</dbReference>